<gene>
    <name type="primary">pycr2</name>
    <name type="ORF">DDB_G0269410</name>
</gene>
<reference key="1">
    <citation type="journal article" date="2005" name="Nature">
        <title>The genome of the social amoeba Dictyostelium discoideum.</title>
        <authorList>
            <person name="Eichinger L."/>
            <person name="Pachebat J.A."/>
            <person name="Gloeckner G."/>
            <person name="Rajandream M.A."/>
            <person name="Sucgang R."/>
            <person name="Berriman M."/>
            <person name="Song J."/>
            <person name="Olsen R."/>
            <person name="Szafranski K."/>
            <person name="Xu Q."/>
            <person name="Tunggal B."/>
            <person name="Kummerfeld S."/>
            <person name="Madera M."/>
            <person name="Konfortov B.A."/>
            <person name="Rivero F."/>
            <person name="Bankier A.T."/>
            <person name="Lehmann R."/>
            <person name="Hamlin N."/>
            <person name="Davies R."/>
            <person name="Gaudet P."/>
            <person name="Fey P."/>
            <person name="Pilcher K."/>
            <person name="Chen G."/>
            <person name="Saunders D."/>
            <person name="Sodergren E.J."/>
            <person name="Davis P."/>
            <person name="Kerhornou A."/>
            <person name="Nie X."/>
            <person name="Hall N."/>
            <person name="Anjard C."/>
            <person name="Hemphill L."/>
            <person name="Bason N."/>
            <person name="Farbrother P."/>
            <person name="Desany B."/>
            <person name="Just E."/>
            <person name="Morio T."/>
            <person name="Rost R."/>
            <person name="Churcher C.M."/>
            <person name="Cooper J."/>
            <person name="Haydock S."/>
            <person name="van Driessche N."/>
            <person name="Cronin A."/>
            <person name="Goodhead I."/>
            <person name="Muzny D.M."/>
            <person name="Mourier T."/>
            <person name="Pain A."/>
            <person name="Lu M."/>
            <person name="Harper D."/>
            <person name="Lindsay R."/>
            <person name="Hauser H."/>
            <person name="James K.D."/>
            <person name="Quiles M."/>
            <person name="Madan Babu M."/>
            <person name="Saito T."/>
            <person name="Buchrieser C."/>
            <person name="Wardroper A."/>
            <person name="Felder M."/>
            <person name="Thangavelu M."/>
            <person name="Johnson D."/>
            <person name="Knights A."/>
            <person name="Loulseged H."/>
            <person name="Mungall K.L."/>
            <person name="Oliver K."/>
            <person name="Price C."/>
            <person name="Quail M.A."/>
            <person name="Urushihara H."/>
            <person name="Hernandez J."/>
            <person name="Rabbinowitsch E."/>
            <person name="Steffen D."/>
            <person name="Sanders M."/>
            <person name="Ma J."/>
            <person name="Kohara Y."/>
            <person name="Sharp S."/>
            <person name="Simmonds M.N."/>
            <person name="Spiegler S."/>
            <person name="Tivey A."/>
            <person name="Sugano S."/>
            <person name="White B."/>
            <person name="Walker D."/>
            <person name="Woodward J.R."/>
            <person name="Winckler T."/>
            <person name="Tanaka Y."/>
            <person name="Shaulsky G."/>
            <person name="Schleicher M."/>
            <person name="Weinstock G.M."/>
            <person name="Rosenthal A."/>
            <person name="Cox E.C."/>
            <person name="Chisholm R.L."/>
            <person name="Gibbs R.A."/>
            <person name="Loomis W.F."/>
            <person name="Platzer M."/>
            <person name="Kay R.R."/>
            <person name="Williams J.G."/>
            <person name="Dear P.H."/>
            <person name="Noegel A.A."/>
            <person name="Barrell B.G."/>
            <person name="Kuspa A."/>
        </authorList>
    </citation>
    <scope>NUCLEOTIDE SEQUENCE [LARGE SCALE GENOMIC DNA]</scope>
    <source>
        <strain>AX4</strain>
    </source>
</reference>
<dbReference type="EC" id="1.5.1.2"/>
<dbReference type="EMBL" id="AAFI02000005">
    <property type="protein sequence ID" value="EAL72055.1"/>
    <property type="molecule type" value="Genomic_DNA"/>
</dbReference>
<dbReference type="RefSeq" id="XP_645947.1">
    <property type="nucleotide sequence ID" value="XM_640855.1"/>
</dbReference>
<dbReference type="SMR" id="Q55E34"/>
<dbReference type="BioGRID" id="1241894">
    <property type="interactions" value="1"/>
</dbReference>
<dbReference type="FunCoup" id="Q55E34">
    <property type="interactions" value="343"/>
</dbReference>
<dbReference type="STRING" id="44689.Q55E34"/>
<dbReference type="PaxDb" id="44689-DDB0232207"/>
<dbReference type="EnsemblProtists" id="EAL72055">
    <property type="protein sequence ID" value="EAL72055"/>
    <property type="gene ID" value="DDB_G0269410"/>
</dbReference>
<dbReference type="GeneID" id="8616891"/>
<dbReference type="KEGG" id="ddi:DDB_G0269410"/>
<dbReference type="dictyBase" id="DDB_G0269410"/>
<dbReference type="VEuPathDB" id="AmoebaDB:DDB_G0269410"/>
<dbReference type="eggNOG" id="KOG3124">
    <property type="taxonomic scope" value="Eukaryota"/>
</dbReference>
<dbReference type="HOGENOM" id="CLU_042344_1_2_1"/>
<dbReference type="InParanoid" id="Q55E34"/>
<dbReference type="OMA" id="VWAVKPQ"/>
<dbReference type="PhylomeDB" id="Q55E34"/>
<dbReference type="UniPathway" id="UPA00098">
    <property type="reaction ID" value="UER00361"/>
</dbReference>
<dbReference type="PRO" id="PR:Q55E34"/>
<dbReference type="Proteomes" id="UP000002195">
    <property type="component" value="Chromosome 1"/>
</dbReference>
<dbReference type="GO" id="GO:0005739">
    <property type="term" value="C:mitochondrion"/>
    <property type="evidence" value="ECO:0000250"/>
    <property type="project" value="UniProtKB"/>
</dbReference>
<dbReference type="GO" id="GO:0004735">
    <property type="term" value="F:pyrroline-5-carboxylate reductase activity"/>
    <property type="evidence" value="ECO:0000318"/>
    <property type="project" value="GO_Central"/>
</dbReference>
<dbReference type="GO" id="GO:0055129">
    <property type="term" value="P:L-proline biosynthetic process"/>
    <property type="evidence" value="ECO:0000318"/>
    <property type="project" value="GO_Central"/>
</dbReference>
<dbReference type="GO" id="GO:0006561">
    <property type="term" value="P:proline biosynthetic process"/>
    <property type="evidence" value="ECO:0000250"/>
    <property type="project" value="UniProtKB"/>
</dbReference>
<dbReference type="FunFam" id="3.40.50.720:FF:000866">
    <property type="entry name" value="Pyrroline-5-carboxylate reductase"/>
    <property type="match status" value="1"/>
</dbReference>
<dbReference type="Gene3D" id="3.40.50.720">
    <property type="entry name" value="NAD(P)-binding Rossmann-like Domain"/>
    <property type="match status" value="1"/>
</dbReference>
<dbReference type="Gene3D" id="1.10.3730.10">
    <property type="entry name" value="ProC C-terminal domain-like"/>
    <property type="match status" value="1"/>
</dbReference>
<dbReference type="HAMAP" id="MF_01925">
    <property type="entry name" value="P5C_reductase"/>
    <property type="match status" value="1"/>
</dbReference>
<dbReference type="InterPro" id="IPR008927">
    <property type="entry name" value="6-PGluconate_DH-like_C_sf"/>
</dbReference>
<dbReference type="InterPro" id="IPR036291">
    <property type="entry name" value="NAD(P)-bd_dom_sf"/>
</dbReference>
<dbReference type="InterPro" id="IPR028939">
    <property type="entry name" value="P5C_Rdtase_cat_N"/>
</dbReference>
<dbReference type="InterPro" id="IPR029036">
    <property type="entry name" value="P5CR_dimer"/>
</dbReference>
<dbReference type="InterPro" id="IPR000304">
    <property type="entry name" value="Pyrroline-COOH_reductase"/>
</dbReference>
<dbReference type="PANTHER" id="PTHR11645">
    <property type="entry name" value="PYRROLINE-5-CARBOXYLATE REDUCTASE"/>
    <property type="match status" value="1"/>
</dbReference>
<dbReference type="PANTHER" id="PTHR11645:SF70">
    <property type="entry name" value="PYRROLINE-5-CARBOXYLATE REDUCTASE 2"/>
    <property type="match status" value="1"/>
</dbReference>
<dbReference type="Pfam" id="PF03807">
    <property type="entry name" value="F420_oxidored"/>
    <property type="match status" value="1"/>
</dbReference>
<dbReference type="Pfam" id="PF14748">
    <property type="entry name" value="P5CR_dimer"/>
    <property type="match status" value="1"/>
</dbReference>
<dbReference type="PIRSF" id="PIRSF000193">
    <property type="entry name" value="Pyrrol-5-carb_rd"/>
    <property type="match status" value="1"/>
</dbReference>
<dbReference type="SUPFAM" id="SSF48179">
    <property type="entry name" value="6-phosphogluconate dehydrogenase C-terminal domain-like"/>
    <property type="match status" value="1"/>
</dbReference>
<dbReference type="SUPFAM" id="SSF51735">
    <property type="entry name" value="NAD(P)-binding Rossmann-fold domains"/>
    <property type="match status" value="1"/>
</dbReference>
<organism>
    <name type="scientific">Dictyostelium discoideum</name>
    <name type="common">Social amoeba</name>
    <dbReference type="NCBI Taxonomy" id="44689"/>
    <lineage>
        <taxon>Eukaryota</taxon>
        <taxon>Amoebozoa</taxon>
        <taxon>Evosea</taxon>
        <taxon>Eumycetozoa</taxon>
        <taxon>Dictyostelia</taxon>
        <taxon>Dictyosteliales</taxon>
        <taxon>Dictyosteliaceae</taxon>
        <taxon>Dictyostelium</taxon>
    </lineage>
</organism>
<sequence length="299" mass="31719">MVATDLKNNKNIAILGSGNLGVSIARGIVASGHYKSNQIVLTRRTLEKIQHLKDEEGFQITSDNLEAANKCAILIIGVLPAQVPQLLESIKHLVTKDHIIISVVLGITISGIRSHLQPDVYTPIVRAMPNTAIQYCESMTCIANKSDHPTKSGTAEQELADQNALEVTEKIFNCCGECITISEEAMVSAPALCSCGTAFFCRIIRAAASAGCEIGFHAEDAVRIAAQTAKGAAIMLLKNDSHPESEIDRITTPSGATIAGLNTMEHNGLSSAIIKGIVMSAEKSSKSQAALNKLNNVSS</sequence>
<feature type="chain" id="PRO_0000328305" description="Pyrroline-5-carboxylate reductase 2">
    <location>
        <begin position="1"/>
        <end position="299"/>
    </location>
</feature>
<protein>
    <recommendedName>
        <fullName>Pyrroline-5-carboxylate reductase 2</fullName>
        <shortName>P5C reductase 2</shortName>
        <shortName>P5CR 2</shortName>
        <ecNumber>1.5.1.2</ecNumber>
    </recommendedName>
</protein>
<keyword id="KW-0028">Amino-acid biosynthesis</keyword>
<keyword id="KW-0521">NADP</keyword>
<keyword id="KW-0560">Oxidoreductase</keyword>
<keyword id="KW-0641">Proline biosynthesis</keyword>
<keyword id="KW-1185">Reference proteome</keyword>
<name>P5CR2_DICDI</name>
<evidence type="ECO:0000250" key="1"/>
<evidence type="ECO:0000305" key="2"/>
<comment type="catalytic activity">
    <reaction>
        <text>L-proline + NADP(+) = (S)-1-pyrroline-5-carboxylate + NADPH + 2 H(+)</text>
        <dbReference type="Rhea" id="RHEA:14109"/>
        <dbReference type="ChEBI" id="CHEBI:15378"/>
        <dbReference type="ChEBI" id="CHEBI:17388"/>
        <dbReference type="ChEBI" id="CHEBI:57783"/>
        <dbReference type="ChEBI" id="CHEBI:58349"/>
        <dbReference type="ChEBI" id="CHEBI:60039"/>
        <dbReference type="EC" id="1.5.1.2"/>
    </reaction>
</comment>
<comment type="catalytic activity">
    <reaction>
        <text>L-proline + NAD(+) = (S)-1-pyrroline-5-carboxylate + NADH + 2 H(+)</text>
        <dbReference type="Rhea" id="RHEA:14105"/>
        <dbReference type="ChEBI" id="CHEBI:15378"/>
        <dbReference type="ChEBI" id="CHEBI:17388"/>
        <dbReference type="ChEBI" id="CHEBI:57540"/>
        <dbReference type="ChEBI" id="CHEBI:57945"/>
        <dbReference type="ChEBI" id="CHEBI:60039"/>
        <dbReference type="EC" id="1.5.1.2"/>
    </reaction>
</comment>
<comment type="pathway">
    <text>Amino-acid biosynthesis; L-proline biosynthesis; L-proline from L-glutamate 5-semialdehyde: step 1/1.</text>
</comment>
<comment type="subunit">
    <text evidence="1">Homodecamer; composed of 5 homodimers.</text>
</comment>
<comment type="similarity">
    <text evidence="2">Belongs to the pyrroline-5-carboxylate reductase family.</text>
</comment>
<accession>Q55E34</accession>
<proteinExistence type="inferred from homology"/>